<dbReference type="EC" id="1.11.1.-"/>
<dbReference type="EMBL" id="AF022214">
    <property type="protein sequence ID" value="AAC18502.1"/>
    <property type="molecule type" value="Genomic_DNA"/>
</dbReference>
<dbReference type="PIR" id="C72807">
    <property type="entry name" value="C72807"/>
</dbReference>
<dbReference type="RefSeq" id="NP_046877.1">
    <property type="nucleotide sequence ID" value="NC_001900.1"/>
</dbReference>
<dbReference type="SMR" id="O64252"/>
<dbReference type="ESTHER" id="bpmdd-prxh">
    <property type="family name" value="Haloperoxidase"/>
</dbReference>
<dbReference type="GeneID" id="1261625"/>
<dbReference type="KEGG" id="vg:1261625"/>
<dbReference type="OrthoDB" id="6494at10239"/>
<dbReference type="Proteomes" id="UP000002131">
    <property type="component" value="Segment"/>
</dbReference>
<dbReference type="GO" id="GO:0004601">
    <property type="term" value="F:peroxidase activity"/>
    <property type="evidence" value="ECO:0007669"/>
    <property type="project" value="UniProtKB-KW"/>
</dbReference>
<dbReference type="Gene3D" id="3.40.50.1820">
    <property type="entry name" value="alpha/beta hydrolase"/>
    <property type="match status" value="1"/>
</dbReference>
<dbReference type="InterPro" id="IPR050471">
    <property type="entry name" value="AB_hydrolase"/>
</dbReference>
<dbReference type="InterPro" id="IPR000073">
    <property type="entry name" value="AB_hydrolase_1"/>
</dbReference>
<dbReference type="InterPro" id="IPR029058">
    <property type="entry name" value="AB_hydrolase_fold"/>
</dbReference>
<dbReference type="PANTHER" id="PTHR43433:SF1">
    <property type="entry name" value="BLL5160 PROTEIN"/>
    <property type="match status" value="1"/>
</dbReference>
<dbReference type="PANTHER" id="PTHR43433">
    <property type="entry name" value="HYDROLASE, ALPHA/BETA FOLD FAMILY PROTEIN"/>
    <property type="match status" value="1"/>
</dbReference>
<dbReference type="Pfam" id="PF00561">
    <property type="entry name" value="Abhydrolase_1"/>
    <property type="match status" value="1"/>
</dbReference>
<dbReference type="PRINTS" id="PR00111">
    <property type="entry name" value="ABHYDROLASE"/>
</dbReference>
<dbReference type="SUPFAM" id="SSF53474">
    <property type="entry name" value="alpha/beta-Hydrolases"/>
    <property type="match status" value="1"/>
</dbReference>
<organismHost>
    <name type="scientific">Mycobacterium</name>
    <dbReference type="NCBI Taxonomy" id="1763"/>
</organismHost>
<protein>
    <recommendedName>
        <fullName>Putative non-heme haloperoxidase</fullName>
        <ecNumber>1.11.1.-</ecNumber>
    </recommendedName>
</protein>
<feature type="chain" id="PRO_0000207069" description="Putative non-heme haloperoxidase">
    <location>
        <begin position="1"/>
        <end position="278"/>
    </location>
</feature>
<feature type="domain" description="AB hydrolase-1" evidence="2">
    <location>
        <begin position="24"/>
        <end position="240"/>
    </location>
</feature>
<feature type="active site" evidence="1">
    <location>
        <position position="97"/>
    </location>
</feature>
<feature type="active site" evidence="1">
    <location>
        <position position="221"/>
    </location>
</feature>
<sequence length="278" mass="29803">MKHETIVLADGFRVGVSTVGTGAPLVFLHGLSVSAKAYEEMLTRLAEHGFRVIALDAANHGRSGSLPTGHTVEDMTRVTLKTLDELDIHRAIFAGHSMGGGMVVEIAARHPHRVAAAVLLDAAAGQEHHDNIKVGHYATLAFRAAKKLGEAVTDIVGDGYEAMHLRDTGEKLSFLGMLRDSVSGLRFVRAAFALMKADTTPLLHAMYRHGVPTAVLHGLHDQIVPYEAGLSTAKITNASFYGVDGFHSWMLADPELAADLIALALLDLFPRRYITGAG</sequence>
<gene>
    <name type="primary">59.2</name>
</gene>
<keyword id="KW-0560">Oxidoreductase</keyword>
<keyword id="KW-0575">Peroxidase</keyword>
<keyword id="KW-1185">Reference proteome</keyword>
<reference key="1">
    <citation type="journal article" date="1998" name="J. Mol. Biol.">
        <title>Genome structure of mycobacteriophage D29: implications for phage evolution.</title>
        <authorList>
            <person name="Ford M.E."/>
            <person name="Sarkis G.J."/>
            <person name="Belanger A.E."/>
            <person name="Hendrix R.W."/>
            <person name="Hatfull G.F."/>
        </authorList>
    </citation>
    <scope>NUCLEOTIDE SEQUENCE [LARGE SCALE GENOMIC DNA]</scope>
</reference>
<organism>
    <name type="scientific">Mycobacterium phage D29</name>
    <name type="common">Mycobacteriophage D29</name>
    <dbReference type="NCBI Taxonomy" id="28369"/>
    <lineage>
        <taxon>Viruses</taxon>
        <taxon>Duplodnaviria</taxon>
        <taxon>Heunggongvirae</taxon>
        <taxon>Uroviricota</taxon>
        <taxon>Caudoviricetes</taxon>
        <taxon>Fromanvirus</taxon>
    </lineage>
</organism>
<evidence type="ECO:0000250" key="1"/>
<evidence type="ECO:0000255" key="2"/>
<evidence type="ECO:0000305" key="3"/>
<accession>O64252</accession>
<proteinExistence type="inferred from homology"/>
<name>PRXH_BPMD2</name>
<comment type="similarity">
    <text evidence="3">Belongs to the AB hydrolase superfamily.</text>
</comment>